<name>VP10_NPVSE</name>
<protein>
    <recommendedName>
        <fullName>Protein p10</fullName>
    </recommendedName>
    <alternativeName>
        <fullName>Fibrous body protein</fullName>
    </alternativeName>
</protein>
<feature type="chain" id="PRO_0000132882" description="Protein p10">
    <location>
        <begin position="1"/>
        <end position="88"/>
    </location>
</feature>
<feature type="region of interest" description="Disordered" evidence="1">
    <location>
        <begin position="65"/>
        <end position="88"/>
    </location>
</feature>
<feature type="compositionally biased region" description="Low complexity" evidence="1">
    <location>
        <begin position="77"/>
        <end position="88"/>
    </location>
</feature>
<organism>
    <name type="scientific">Spodoptera exigua nuclear polyhedrosis virus (strain US)</name>
    <name type="common">SeMNPV</name>
    <dbReference type="NCBI Taxonomy" id="31506"/>
    <lineage>
        <taxon>Viruses</taxon>
        <taxon>Viruses incertae sedis</taxon>
        <taxon>Naldaviricetes</taxon>
        <taxon>Lefavirales</taxon>
        <taxon>Baculoviridae</taxon>
        <taxon>Alphabaculovirus</taxon>
        <taxon>Spodoptera exigua multiple nucleopolyhedrovirus</taxon>
    </lineage>
</organism>
<reference key="1">
    <citation type="journal article" date="1993" name="J. Gen. Virol.">
        <title>Nucleotide sequence and transcriptional analysis of the p10 gene of Spodoptera exigua nuclear polyhedrosis virus.</title>
        <authorList>
            <person name="Zuidema D."/>
            <person name="van Oers M.M."/>
            <person name="van Strien E.A."/>
            <person name="Caballero P.C."/>
            <person name="Klok E.J."/>
            <person name="Goldbach R.W."/>
            <person name="Vlak J.M."/>
        </authorList>
    </citation>
    <scope>NUCLEOTIDE SEQUENCE [GENOMIC DNA]</scope>
</reference>
<reference key="2">
    <citation type="journal article" date="1999" name="J. Gen. Virol.">
        <title>Sequence and organization of the Spodoptera exigua multicapsid nucleopolyhedrovirus genome.</title>
        <authorList>
            <person name="Ijkel W.F.J."/>
            <person name="van Strien E.A."/>
            <person name="Heldens J.G.M."/>
            <person name="Broer R."/>
            <person name="Zuidema D."/>
            <person name="Goldbach R.W."/>
            <person name="Vlak J.M."/>
        </authorList>
    </citation>
    <scope>NUCLEOTIDE SEQUENCE [LARGE SCALE GENOMIC DNA]</scope>
</reference>
<comment type="function">
    <text>Seems to be involved in the morphogenesis of the polyhedra. Forms extensive fibrillar structures in both nucleus and cytoplasm. It is involved in the liberation of polyhedra from infected-insect cell.</text>
</comment>
<comment type="similarity">
    <text evidence="2">Belongs to the baculoviridae p10 family.</text>
</comment>
<accession>P34052</accession>
<dbReference type="EMBL" id="AF169823">
    <property type="protein sequence ID" value="AAF33659.1"/>
    <property type="molecule type" value="Genomic_DNA"/>
</dbReference>
<dbReference type="PIR" id="JQ2033">
    <property type="entry name" value="JQ2033"/>
</dbReference>
<dbReference type="RefSeq" id="NP_037890.1">
    <property type="nucleotide sequence ID" value="NC_002169.1"/>
</dbReference>
<dbReference type="SMR" id="P34052"/>
<dbReference type="GeneID" id="2715821"/>
<dbReference type="KEGG" id="vg:2715821"/>
<dbReference type="Proteomes" id="UP000203151">
    <property type="component" value="Segment"/>
</dbReference>
<dbReference type="GO" id="GO:0039679">
    <property type="term" value="C:viral occlusion body"/>
    <property type="evidence" value="ECO:0007669"/>
    <property type="project" value="UniProtKB-KW"/>
</dbReference>
<dbReference type="InterPro" id="IPR008702">
    <property type="entry name" value="NPV_P10"/>
</dbReference>
<dbReference type="Pfam" id="PF05531">
    <property type="entry name" value="NPV_P10"/>
    <property type="match status" value="1"/>
</dbReference>
<gene>
    <name type="primary">P10</name>
</gene>
<sequence length="88" mass="9607">MSQNILLLIRADIKAVDEKVDALQQAVNDVSANLPDTSELSAKLDAQATTLDTIVTQVNNINDVLNPDLPDVPGNLQKQQQQKKSNKK</sequence>
<keyword id="KW-0426">Late protein</keyword>
<keyword id="KW-0842">Viral occlusion body</keyword>
<organismHost>
    <name type="scientific">Lepidoptera</name>
    <name type="common">butterflies and moths</name>
    <dbReference type="NCBI Taxonomy" id="7088"/>
</organismHost>
<evidence type="ECO:0000256" key="1">
    <source>
        <dbReference type="SAM" id="MobiDB-lite"/>
    </source>
</evidence>
<evidence type="ECO:0000305" key="2"/>
<proteinExistence type="inferred from homology"/>